<keyword id="KW-0067">ATP-binding</keyword>
<keyword id="KW-0418">Kinase</keyword>
<keyword id="KW-0472">Membrane</keyword>
<keyword id="KW-0547">Nucleotide-binding</keyword>
<keyword id="KW-1185">Reference proteome</keyword>
<keyword id="KW-0808">Transferase</keyword>
<keyword id="KW-0812">Transmembrane</keyword>
<keyword id="KW-1133">Transmembrane helix</keyword>
<keyword id="KW-0829">Tyrosine-protein kinase</keyword>
<organism>
    <name type="scientific">Dictyostelium discoideum</name>
    <name type="common">Social amoeba</name>
    <dbReference type="NCBI Taxonomy" id="44689"/>
    <lineage>
        <taxon>Eukaryota</taxon>
        <taxon>Amoebozoa</taxon>
        <taxon>Evosea</taxon>
        <taxon>Eumycetozoa</taxon>
        <taxon>Dictyostelia</taxon>
        <taxon>Dictyosteliales</taxon>
        <taxon>Dictyosteliaceae</taxon>
        <taxon>Dictyostelium</taxon>
    </lineage>
</organism>
<protein>
    <recommendedName>
        <fullName>Seven transmembrane domain-containing tyrosine-protein kinase 1</fullName>
        <ecNumber>2.7.10.1</ecNumber>
    </recommendedName>
</protein>
<sequence>MDTSCVSINQCGFCTYLFNRSIPLAGEGDGAIMFNTMVDSMALGYIFSALYLLFRLQRSYTYLQKSSNNNNGNGNGNGSSNNDIISINSSNGLNRSGVKISQDTLWDKNFGISIDHPRIINSTYFKYTLFVSLWLAFEGLLLLFLPPNSLAYPAFVIIVGTGHIVTDNWVLVFLYGKEDDRFSARRSFYSCTLLYLIICCTTLASFFDDQTMCKKNDCQTFMFQDEYTSLAITVASLVVYTIVLGMTIKRSFLRPTGRIWLLFLMGYNCISSVGALLNILDVDAGYCFLGIAAIIYSFSYGPLLFRTCGNDTNLLRARGEFLPLLTNFQEYTSLFGRESISTSGEGATTALQLSAFYIRFNEFKFGQVIGEGYFGEVRKAVWKGAVVAVKILHRNSFRNTDGNKEENVFLKEVAILSILRHPNVLQFLGVCSETNLNGIVTEYMGGGSLDRLLTDRYFLIKQNPILAWNMAISIARGMFYLHDWKPNPILHRDLSTKNILLDESLTIAKVADFGLSKEQGFEMTSTVGHLCYQAPEVFIGELYTPKADVYSFGLLVWCIITGEQPNQNLQPLKMAHLAAYENYRPPMPQPMDPMWENLGKLIEMCWKKSPEERPSFSFILDFLEANVPISNTYVPPLKCISDNSVSNNFNNNNNTLNNGSTNNLGLLTLSFSTLNLQKQGGGAEEFHYIDG</sequence>
<reference key="1">
    <citation type="journal article" date="2005" name="Nature">
        <title>The genome of the social amoeba Dictyostelium discoideum.</title>
        <authorList>
            <person name="Eichinger L."/>
            <person name="Pachebat J.A."/>
            <person name="Gloeckner G."/>
            <person name="Rajandream M.A."/>
            <person name="Sucgang R."/>
            <person name="Berriman M."/>
            <person name="Song J."/>
            <person name="Olsen R."/>
            <person name="Szafranski K."/>
            <person name="Xu Q."/>
            <person name="Tunggal B."/>
            <person name="Kummerfeld S."/>
            <person name="Madera M."/>
            <person name="Konfortov B.A."/>
            <person name="Rivero F."/>
            <person name="Bankier A.T."/>
            <person name="Lehmann R."/>
            <person name="Hamlin N."/>
            <person name="Davies R."/>
            <person name="Gaudet P."/>
            <person name="Fey P."/>
            <person name="Pilcher K."/>
            <person name="Chen G."/>
            <person name="Saunders D."/>
            <person name="Sodergren E.J."/>
            <person name="Davis P."/>
            <person name="Kerhornou A."/>
            <person name="Nie X."/>
            <person name="Hall N."/>
            <person name="Anjard C."/>
            <person name="Hemphill L."/>
            <person name="Bason N."/>
            <person name="Farbrother P."/>
            <person name="Desany B."/>
            <person name="Just E."/>
            <person name="Morio T."/>
            <person name="Rost R."/>
            <person name="Churcher C.M."/>
            <person name="Cooper J."/>
            <person name="Haydock S."/>
            <person name="van Driessche N."/>
            <person name="Cronin A."/>
            <person name="Goodhead I."/>
            <person name="Muzny D.M."/>
            <person name="Mourier T."/>
            <person name="Pain A."/>
            <person name="Lu M."/>
            <person name="Harper D."/>
            <person name="Lindsay R."/>
            <person name="Hauser H."/>
            <person name="James K.D."/>
            <person name="Quiles M."/>
            <person name="Madan Babu M."/>
            <person name="Saito T."/>
            <person name="Buchrieser C."/>
            <person name="Wardroper A."/>
            <person name="Felder M."/>
            <person name="Thangavelu M."/>
            <person name="Johnson D."/>
            <person name="Knights A."/>
            <person name="Loulseged H."/>
            <person name="Mungall K.L."/>
            <person name="Oliver K."/>
            <person name="Price C."/>
            <person name="Quail M.A."/>
            <person name="Urushihara H."/>
            <person name="Hernandez J."/>
            <person name="Rabbinowitsch E."/>
            <person name="Steffen D."/>
            <person name="Sanders M."/>
            <person name="Ma J."/>
            <person name="Kohara Y."/>
            <person name="Sharp S."/>
            <person name="Simmonds M.N."/>
            <person name="Spiegler S."/>
            <person name="Tivey A."/>
            <person name="Sugano S."/>
            <person name="White B."/>
            <person name="Walker D."/>
            <person name="Woodward J.R."/>
            <person name="Winckler T."/>
            <person name="Tanaka Y."/>
            <person name="Shaulsky G."/>
            <person name="Schleicher M."/>
            <person name="Weinstock G.M."/>
            <person name="Rosenthal A."/>
            <person name="Cox E.C."/>
            <person name="Chisholm R.L."/>
            <person name="Gibbs R.A."/>
            <person name="Loomis W.F."/>
            <person name="Platzer M."/>
            <person name="Kay R.R."/>
            <person name="Williams J.G."/>
            <person name="Dear P.H."/>
            <person name="Noegel A.A."/>
            <person name="Barrell B.G."/>
            <person name="Kuspa A."/>
        </authorList>
    </citation>
    <scope>NUCLEOTIDE SEQUENCE [LARGE SCALE GENOMIC DNA]</scope>
    <source>
        <strain>AX4</strain>
    </source>
</reference>
<dbReference type="EC" id="2.7.10.1"/>
<dbReference type="EMBL" id="AAFI02000079">
    <property type="protein sequence ID" value="EAL64569.1"/>
    <property type="molecule type" value="Genomic_DNA"/>
</dbReference>
<dbReference type="RefSeq" id="XP_638070.1">
    <property type="nucleotide sequence ID" value="XM_632978.1"/>
</dbReference>
<dbReference type="SMR" id="Q54N73"/>
<dbReference type="FunCoup" id="Q54N73">
    <property type="interactions" value="126"/>
</dbReference>
<dbReference type="STRING" id="44689.Q54N73"/>
<dbReference type="PaxDb" id="44689-DDB0229939"/>
<dbReference type="EnsemblProtists" id="EAL64569">
    <property type="protein sequence ID" value="EAL64569"/>
    <property type="gene ID" value="DDB_G0285463"/>
</dbReference>
<dbReference type="GeneID" id="8625116"/>
<dbReference type="KEGG" id="ddi:DDB_G0285463"/>
<dbReference type="dictyBase" id="DDB_G0285463"/>
<dbReference type="VEuPathDB" id="AmoebaDB:DDB_G0285463"/>
<dbReference type="eggNOG" id="KOG0192">
    <property type="taxonomic scope" value="Eukaryota"/>
</dbReference>
<dbReference type="HOGENOM" id="CLU_398728_0_0_1"/>
<dbReference type="InParanoid" id="Q54N73"/>
<dbReference type="OMA" id="NCIVTEY"/>
<dbReference type="PhylomeDB" id="Q54N73"/>
<dbReference type="Reactome" id="R-DDI-5675482">
    <property type="pathway name" value="Regulation of necroptotic cell death"/>
</dbReference>
<dbReference type="PRO" id="PR:Q54N73"/>
<dbReference type="Proteomes" id="UP000002195">
    <property type="component" value="Chromosome 4"/>
</dbReference>
<dbReference type="GO" id="GO:0005737">
    <property type="term" value="C:cytoplasm"/>
    <property type="evidence" value="ECO:0000318"/>
    <property type="project" value="GO_Central"/>
</dbReference>
<dbReference type="GO" id="GO:0016020">
    <property type="term" value="C:membrane"/>
    <property type="evidence" value="ECO:0007669"/>
    <property type="project" value="UniProtKB-SubCell"/>
</dbReference>
<dbReference type="GO" id="GO:0005524">
    <property type="term" value="F:ATP binding"/>
    <property type="evidence" value="ECO:0007669"/>
    <property type="project" value="UniProtKB-KW"/>
</dbReference>
<dbReference type="GO" id="GO:0004672">
    <property type="term" value="F:protein kinase activity"/>
    <property type="evidence" value="ECO:0000318"/>
    <property type="project" value="GO_Central"/>
</dbReference>
<dbReference type="GO" id="GO:0004714">
    <property type="term" value="F:transmembrane receptor protein tyrosine kinase activity"/>
    <property type="evidence" value="ECO:0007669"/>
    <property type="project" value="UniProtKB-EC"/>
</dbReference>
<dbReference type="GO" id="GO:0007165">
    <property type="term" value="P:signal transduction"/>
    <property type="evidence" value="ECO:0000318"/>
    <property type="project" value="GO_Central"/>
</dbReference>
<dbReference type="CDD" id="cd13999">
    <property type="entry name" value="STKc_MAP3K-like"/>
    <property type="match status" value="1"/>
</dbReference>
<dbReference type="FunFam" id="3.30.200.20:FF:000180">
    <property type="entry name" value="serine/threonine-protein kinase STY46-like"/>
    <property type="match status" value="1"/>
</dbReference>
<dbReference type="Gene3D" id="1.10.510.10">
    <property type="entry name" value="Transferase(Phosphotransferase) domain 1"/>
    <property type="match status" value="1"/>
</dbReference>
<dbReference type="InterPro" id="IPR011009">
    <property type="entry name" value="Kinase-like_dom_sf"/>
</dbReference>
<dbReference type="InterPro" id="IPR000719">
    <property type="entry name" value="Prot_kinase_dom"/>
</dbReference>
<dbReference type="InterPro" id="IPR017441">
    <property type="entry name" value="Protein_kinase_ATP_BS"/>
</dbReference>
<dbReference type="InterPro" id="IPR001245">
    <property type="entry name" value="Ser-Thr/Tyr_kinase_cat_dom"/>
</dbReference>
<dbReference type="InterPro" id="IPR051681">
    <property type="entry name" value="Ser/Thr_Kinases-Pseudokinases"/>
</dbReference>
<dbReference type="InterPro" id="IPR008266">
    <property type="entry name" value="Tyr_kinase_AS"/>
</dbReference>
<dbReference type="PANTHER" id="PTHR44329">
    <property type="entry name" value="SERINE/THREONINE-PROTEIN KINASE TNNI3K-RELATED"/>
    <property type="match status" value="1"/>
</dbReference>
<dbReference type="Pfam" id="PF07714">
    <property type="entry name" value="PK_Tyr_Ser-Thr"/>
    <property type="match status" value="1"/>
</dbReference>
<dbReference type="PRINTS" id="PR00109">
    <property type="entry name" value="TYRKINASE"/>
</dbReference>
<dbReference type="SUPFAM" id="SSF56112">
    <property type="entry name" value="Protein kinase-like (PK-like)"/>
    <property type="match status" value="1"/>
</dbReference>
<dbReference type="PROSITE" id="PS00107">
    <property type="entry name" value="PROTEIN_KINASE_ATP"/>
    <property type="match status" value="1"/>
</dbReference>
<dbReference type="PROSITE" id="PS50011">
    <property type="entry name" value="PROTEIN_KINASE_DOM"/>
    <property type="match status" value="1"/>
</dbReference>
<dbReference type="PROSITE" id="PS00109">
    <property type="entry name" value="PROTEIN_KINASE_TYR"/>
    <property type="match status" value="1"/>
</dbReference>
<gene>
    <name type="primary">7tmk1</name>
    <name type="ORF">DDB_G0285463</name>
</gene>
<evidence type="ECO:0000255" key="1"/>
<evidence type="ECO:0000255" key="2">
    <source>
        <dbReference type="PROSITE-ProRule" id="PRU00159"/>
    </source>
</evidence>
<evidence type="ECO:0000255" key="3">
    <source>
        <dbReference type="PROSITE-ProRule" id="PRU10028"/>
    </source>
</evidence>
<evidence type="ECO:0000305" key="4"/>
<feature type="chain" id="PRO_0000355144" description="Seven transmembrane domain-containing tyrosine-protein kinase 1">
    <location>
        <begin position="1"/>
        <end position="691"/>
    </location>
</feature>
<feature type="topological domain" description="Extracellular" evidence="1">
    <location>
        <begin position="1"/>
        <end position="33"/>
    </location>
</feature>
<feature type="transmembrane region" description="Helical; Name=1" evidence="1">
    <location>
        <begin position="34"/>
        <end position="54"/>
    </location>
</feature>
<feature type="topological domain" description="Cytoplasmic" evidence="1">
    <location>
        <begin position="55"/>
        <end position="126"/>
    </location>
</feature>
<feature type="transmembrane region" description="Helical; Name=2" evidence="1">
    <location>
        <begin position="127"/>
        <end position="144"/>
    </location>
</feature>
<feature type="topological domain" description="Extracellular" evidence="1">
    <location>
        <begin position="145"/>
        <end position="153"/>
    </location>
</feature>
<feature type="transmembrane region" description="Helical; Name=3" evidence="1">
    <location>
        <begin position="154"/>
        <end position="176"/>
    </location>
</feature>
<feature type="topological domain" description="Cytoplasmic" evidence="1">
    <location>
        <begin position="177"/>
        <end position="186"/>
    </location>
</feature>
<feature type="transmembrane region" description="Helical; Name=4" evidence="1">
    <location>
        <begin position="187"/>
        <end position="207"/>
    </location>
</feature>
<feature type="topological domain" description="Extracellular" evidence="1">
    <location>
        <begin position="208"/>
        <end position="227"/>
    </location>
</feature>
<feature type="transmembrane region" description="Helical; Name=5" evidence="1">
    <location>
        <begin position="228"/>
        <end position="248"/>
    </location>
</feature>
<feature type="topological domain" description="Cytoplasmic" evidence="1">
    <location>
        <begin position="249"/>
        <end position="258"/>
    </location>
</feature>
<feature type="transmembrane region" description="Helical; Name=6" evidence="1">
    <location>
        <begin position="259"/>
        <end position="279"/>
    </location>
</feature>
<feature type="topological domain" description="Extracellular" evidence="1">
    <location>
        <begin position="280"/>
        <end position="284"/>
    </location>
</feature>
<feature type="transmembrane region" description="Helical; Name=7" evidence="1">
    <location>
        <begin position="285"/>
        <end position="305"/>
    </location>
</feature>
<feature type="topological domain" description="Cytoplasmic" evidence="1">
    <location>
        <begin position="306"/>
        <end position="691"/>
    </location>
</feature>
<feature type="domain" description="Protein kinase" evidence="2">
    <location>
        <begin position="363"/>
        <end position="634"/>
    </location>
</feature>
<feature type="active site" description="Proton acceptor" evidence="2 3">
    <location>
        <position position="493"/>
    </location>
</feature>
<feature type="binding site" evidence="2">
    <location>
        <begin position="369"/>
        <end position="377"/>
    </location>
    <ligand>
        <name>ATP</name>
        <dbReference type="ChEBI" id="CHEBI:30616"/>
    </ligand>
</feature>
<feature type="binding site" evidence="2">
    <location>
        <position position="390"/>
    </location>
    <ligand>
        <name>ATP</name>
        <dbReference type="ChEBI" id="CHEBI:30616"/>
    </ligand>
</feature>
<comment type="catalytic activity">
    <reaction evidence="3">
        <text>L-tyrosyl-[protein] + ATP = O-phospho-L-tyrosyl-[protein] + ADP + H(+)</text>
        <dbReference type="Rhea" id="RHEA:10596"/>
        <dbReference type="Rhea" id="RHEA-COMP:10136"/>
        <dbReference type="Rhea" id="RHEA-COMP:20101"/>
        <dbReference type="ChEBI" id="CHEBI:15378"/>
        <dbReference type="ChEBI" id="CHEBI:30616"/>
        <dbReference type="ChEBI" id="CHEBI:46858"/>
        <dbReference type="ChEBI" id="CHEBI:61978"/>
        <dbReference type="ChEBI" id="CHEBI:456216"/>
        <dbReference type="EC" id="2.7.10.1"/>
    </reaction>
</comment>
<comment type="subcellular location">
    <subcellularLocation>
        <location evidence="4">Membrane</location>
        <topology evidence="4">Multi-pass membrane protein</topology>
    </subcellularLocation>
</comment>
<comment type="similarity">
    <text evidence="4">Belongs to the protein kinase superfamily. TKL Tyr protein kinase family.</text>
</comment>
<name>7TMK1_DICDI</name>
<accession>Q54N73</accession>
<proteinExistence type="inferred from homology"/>